<name>RHXF2_HUMAN</name>
<proteinExistence type="evidence at protein level"/>
<gene>
    <name evidence="8" type="primary">RHOXF2</name>
    <name type="synonym">PEPP2</name>
    <name type="synonym">THG1</name>
</gene>
<reference key="1">
    <citation type="submission" date="2000-10" db="EMBL/GenBank/DDBJ databases">
        <title>Molecular cloning and characterization of a novel testis homeobox gene, THG1, as a potential testicular tumor suppressor gene.</title>
        <authorList>
            <person name="Yin Y."/>
            <person name="Jin Y."/>
            <person name="Levine A.J."/>
        </authorList>
    </citation>
    <scope>NUCLEOTIDE SEQUENCE [MRNA]</scope>
    <source>
        <tissue>Testis</tissue>
    </source>
</reference>
<reference key="2">
    <citation type="journal article" date="2004" name="Nat. Genet.">
        <title>Complete sequencing and characterization of 21,243 full-length human cDNAs.</title>
        <authorList>
            <person name="Ota T."/>
            <person name="Suzuki Y."/>
            <person name="Nishikawa T."/>
            <person name="Otsuki T."/>
            <person name="Sugiyama T."/>
            <person name="Irie R."/>
            <person name="Wakamatsu A."/>
            <person name="Hayashi K."/>
            <person name="Sato H."/>
            <person name="Nagai K."/>
            <person name="Kimura K."/>
            <person name="Makita H."/>
            <person name="Sekine M."/>
            <person name="Obayashi M."/>
            <person name="Nishi T."/>
            <person name="Shibahara T."/>
            <person name="Tanaka T."/>
            <person name="Ishii S."/>
            <person name="Yamamoto J."/>
            <person name="Saito K."/>
            <person name="Kawai Y."/>
            <person name="Isono Y."/>
            <person name="Nakamura Y."/>
            <person name="Nagahari K."/>
            <person name="Murakami K."/>
            <person name="Yasuda T."/>
            <person name="Iwayanagi T."/>
            <person name="Wagatsuma M."/>
            <person name="Shiratori A."/>
            <person name="Sudo H."/>
            <person name="Hosoiri T."/>
            <person name="Kaku Y."/>
            <person name="Kodaira H."/>
            <person name="Kondo H."/>
            <person name="Sugawara M."/>
            <person name="Takahashi M."/>
            <person name="Kanda K."/>
            <person name="Yokoi T."/>
            <person name="Furuya T."/>
            <person name="Kikkawa E."/>
            <person name="Omura Y."/>
            <person name="Abe K."/>
            <person name="Kamihara K."/>
            <person name="Katsuta N."/>
            <person name="Sato K."/>
            <person name="Tanikawa M."/>
            <person name="Yamazaki M."/>
            <person name="Ninomiya K."/>
            <person name="Ishibashi T."/>
            <person name="Yamashita H."/>
            <person name="Murakawa K."/>
            <person name="Fujimori K."/>
            <person name="Tanai H."/>
            <person name="Kimata M."/>
            <person name="Watanabe M."/>
            <person name="Hiraoka S."/>
            <person name="Chiba Y."/>
            <person name="Ishida S."/>
            <person name="Ono Y."/>
            <person name="Takiguchi S."/>
            <person name="Watanabe S."/>
            <person name="Yosida M."/>
            <person name="Hotuta T."/>
            <person name="Kusano J."/>
            <person name="Kanehori K."/>
            <person name="Takahashi-Fujii A."/>
            <person name="Hara H."/>
            <person name="Tanase T.-O."/>
            <person name="Nomura Y."/>
            <person name="Togiya S."/>
            <person name="Komai F."/>
            <person name="Hara R."/>
            <person name="Takeuchi K."/>
            <person name="Arita M."/>
            <person name="Imose N."/>
            <person name="Musashino K."/>
            <person name="Yuuki H."/>
            <person name="Oshima A."/>
            <person name="Sasaki N."/>
            <person name="Aotsuka S."/>
            <person name="Yoshikawa Y."/>
            <person name="Matsunawa H."/>
            <person name="Ichihara T."/>
            <person name="Shiohata N."/>
            <person name="Sano S."/>
            <person name="Moriya S."/>
            <person name="Momiyama H."/>
            <person name="Satoh N."/>
            <person name="Takami S."/>
            <person name="Terashima Y."/>
            <person name="Suzuki O."/>
            <person name="Nakagawa S."/>
            <person name="Senoh A."/>
            <person name="Mizoguchi H."/>
            <person name="Goto Y."/>
            <person name="Shimizu F."/>
            <person name="Wakebe H."/>
            <person name="Hishigaki H."/>
            <person name="Watanabe T."/>
            <person name="Sugiyama A."/>
            <person name="Takemoto M."/>
            <person name="Kawakami B."/>
            <person name="Yamazaki M."/>
            <person name="Watanabe K."/>
            <person name="Kumagai A."/>
            <person name="Itakura S."/>
            <person name="Fukuzumi Y."/>
            <person name="Fujimori Y."/>
            <person name="Komiyama M."/>
            <person name="Tashiro H."/>
            <person name="Tanigami A."/>
            <person name="Fujiwara T."/>
            <person name="Ono T."/>
            <person name="Yamada K."/>
            <person name="Fujii Y."/>
            <person name="Ozaki K."/>
            <person name="Hirao M."/>
            <person name="Ohmori Y."/>
            <person name="Kawabata A."/>
            <person name="Hikiji T."/>
            <person name="Kobatake N."/>
            <person name="Inagaki H."/>
            <person name="Ikema Y."/>
            <person name="Okamoto S."/>
            <person name="Okitani R."/>
            <person name="Kawakami T."/>
            <person name="Noguchi S."/>
            <person name="Itoh T."/>
            <person name="Shigeta K."/>
            <person name="Senba T."/>
            <person name="Matsumura K."/>
            <person name="Nakajima Y."/>
            <person name="Mizuno T."/>
            <person name="Morinaga M."/>
            <person name="Sasaki M."/>
            <person name="Togashi T."/>
            <person name="Oyama M."/>
            <person name="Hata H."/>
            <person name="Watanabe M."/>
            <person name="Komatsu T."/>
            <person name="Mizushima-Sugano J."/>
            <person name="Satoh T."/>
            <person name="Shirai Y."/>
            <person name="Takahashi Y."/>
            <person name="Nakagawa K."/>
            <person name="Okumura K."/>
            <person name="Nagase T."/>
            <person name="Nomura N."/>
            <person name="Kikuchi H."/>
            <person name="Masuho Y."/>
            <person name="Yamashita R."/>
            <person name="Nakai K."/>
            <person name="Yada T."/>
            <person name="Nakamura Y."/>
            <person name="Ohara O."/>
            <person name="Isogai T."/>
            <person name="Sugano S."/>
        </authorList>
    </citation>
    <scope>NUCLEOTIDE SEQUENCE [LARGE SCALE MRNA]</scope>
    <source>
        <tissue>Testis</tissue>
    </source>
</reference>
<reference key="3">
    <citation type="journal article" date="2004" name="Genome Res.">
        <title>The status, quality, and expansion of the NIH full-length cDNA project: the Mammalian Gene Collection (MGC).</title>
        <authorList>
            <consortium name="The MGC Project Team"/>
        </authorList>
    </citation>
    <scope>NUCLEOTIDE SEQUENCE [LARGE SCALE MRNA]</scope>
    <source>
        <tissue>Testis</tissue>
    </source>
</reference>
<reference key="4">
    <citation type="journal article" date="2002" name="Gene">
        <title>Two novel human X-linked homeobox genes, hPEPP1 and hPEPP2, selectively expressed in the testis.</title>
        <authorList>
            <person name="Wayne C.M."/>
            <person name="MacLean J.A. II"/>
            <person name="Cornwall G."/>
            <person name="Wilkinson M.F."/>
        </authorList>
    </citation>
    <scope>TISSUE SPECIFICITY</scope>
</reference>
<reference key="5">
    <citation type="journal article" date="2013" name="J. Proteome Res.">
        <title>Toward a comprehensive characterization of a human cancer cell phosphoproteome.</title>
        <authorList>
            <person name="Zhou H."/>
            <person name="Di Palma S."/>
            <person name="Preisinger C."/>
            <person name="Peng M."/>
            <person name="Polat A.N."/>
            <person name="Heck A.J."/>
            <person name="Mohammed S."/>
        </authorList>
    </citation>
    <scope>IDENTIFICATION BY MASS SPECTROMETRY [LARGE SCALE ANALYSIS]</scope>
    <source>
        <tissue>Erythroleukemia</tissue>
    </source>
</reference>
<reference key="6">
    <citation type="journal article" date="2016" name="Hum. Mol. Genet.">
        <title>The human RHOX gene cluster: target genes and functional analysis of gene variants in infertile men.</title>
        <authorList>
            <person name="Borgmann J."/>
            <person name="Tuettelmann F."/>
            <person name="Dworniczak B."/>
            <person name="Roepke A."/>
            <person name="Song H.W."/>
            <person name="Kliesch S."/>
            <person name="Wilkinson M.F."/>
            <person name="Laurentino S."/>
            <person name="Gromoll J."/>
        </authorList>
    </citation>
    <scope>VARIANTS ARG-68; PHE-176; ARG-227 AND GLY-235</scope>
    <scope>CHARACTERIZATION OF VARIANTS ARG-68 AND ARG-227</scope>
    <scope>FUNCTION</scope>
    <scope>CAUTION</scope>
    <scope>TISSUE SPECIFICITY</scope>
</reference>
<evidence type="ECO:0000250" key="1"/>
<evidence type="ECO:0000255" key="2">
    <source>
        <dbReference type="PROSITE-ProRule" id="PRU00108"/>
    </source>
</evidence>
<evidence type="ECO:0000256" key="3">
    <source>
        <dbReference type="SAM" id="MobiDB-lite"/>
    </source>
</evidence>
<evidence type="ECO:0000269" key="4">
    <source>
    </source>
</evidence>
<evidence type="ECO:0000269" key="5">
    <source>
    </source>
</evidence>
<evidence type="ECO:0000305" key="6"/>
<evidence type="ECO:0000305" key="7">
    <source>
    </source>
</evidence>
<evidence type="ECO:0000312" key="8">
    <source>
        <dbReference type="HGNC" id="HGNC:30011"/>
    </source>
</evidence>
<dbReference type="EMBL" id="AF317219">
    <property type="protein sequence ID" value="AAL02160.1"/>
    <property type="molecule type" value="mRNA"/>
</dbReference>
<dbReference type="EMBL" id="AL590526">
    <property type="protein sequence ID" value="CAC36519.1"/>
    <property type="molecule type" value="mRNA"/>
</dbReference>
<dbReference type="EMBL" id="AK058125">
    <property type="protein sequence ID" value="BAB71675.1"/>
    <property type="molecule type" value="mRNA"/>
</dbReference>
<dbReference type="EMBL" id="BC021719">
    <property type="protein sequence ID" value="AAH21719.1"/>
    <property type="molecule type" value="mRNA"/>
</dbReference>
<dbReference type="CCDS" id="CCDS14594.1"/>
<dbReference type="RefSeq" id="NP_115887.1">
    <property type="nucleotide sequence ID" value="NM_032498.3"/>
</dbReference>
<dbReference type="SMR" id="Q9BQY4"/>
<dbReference type="BioGRID" id="124119">
    <property type="interactions" value="107"/>
</dbReference>
<dbReference type="FunCoup" id="Q9BQY4">
    <property type="interactions" value="82"/>
</dbReference>
<dbReference type="IntAct" id="Q9BQY4">
    <property type="interactions" value="92"/>
</dbReference>
<dbReference type="STRING" id="9606.ENSP00000360441"/>
<dbReference type="iPTMnet" id="Q9BQY4"/>
<dbReference type="PhosphoSitePlus" id="Q9BQY4"/>
<dbReference type="BioMuta" id="RHOXF2"/>
<dbReference type="DMDM" id="37537987"/>
<dbReference type="jPOST" id="Q9BQY4"/>
<dbReference type="MassIVE" id="Q9BQY4"/>
<dbReference type="PaxDb" id="9606-ENSP00000360441"/>
<dbReference type="PeptideAtlas" id="Q9BQY4"/>
<dbReference type="ProteomicsDB" id="78727"/>
<dbReference type="Pumba" id="Q9BQY4"/>
<dbReference type="Antibodypedia" id="520">
    <property type="antibodies" value="173 antibodies from 27 providers"/>
</dbReference>
<dbReference type="DNASU" id="84528"/>
<dbReference type="Ensembl" id="ENST00000371388.5">
    <property type="protein sequence ID" value="ENSP00000360441.3"/>
    <property type="gene ID" value="ENSG00000131721.6"/>
</dbReference>
<dbReference type="GeneID" id="84528"/>
<dbReference type="KEGG" id="hsa:84528"/>
<dbReference type="MANE-Select" id="ENST00000371388.5">
    <property type="protein sequence ID" value="ENSP00000360441.3"/>
    <property type="RefSeq nucleotide sequence ID" value="NM_032498.3"/>
    <property type="RefSeq protein sequence ID" value="NP_115887.1"/>
</dbReference>
<dbReference type="UCSC" id="uc004esl.4">
    <property type="organism name" value="human"/>
</dbReference>
<dbReference type="AGR" id="HGNC:30011"/>
<dbReference type="CTD" id="84528"/>
<dbReference type="DisGeNET" id="84528"/>
<dbReference type="GeneCards" id="RHOXF2"/>
<dbReference type="HGNC" id="HGNC:30011">
    <property type="gene designation" value="RHOXF2"/>
</dbReference>
<dbReference type="HPA" id="ENSG00000131721">
    <property type="expression patterns" value="Tissue enriched (testis)"/>
</dbReference>
<dbReference type="MIM" id="300447">
    <property type="type" value="gene"/>
</dbReference>
<dbReference type="neXtProt" id="NX_Q9BQY4"/>
<dbReference type="OpenTargets" id="ENSG00000131721"/>
<dbReference type="PharmGKB" id="PA162401288"/>
<dbReference type="VEuPathDB" id="HostDB:ENSG00000131721"/>
<dbReference type="eggNOG" id="KOG0490">
    <property type="taxonomic scope" value="Eukaryota"/>
</dbReference>
<dbReference type="GeneTree" id="ENSGT00940000164624"/>
<dbReference type="HOGENOM" id="CLU_044595_1_0_1"/>
<dbReference type="InParanoid" id="Q9BQY4"/>
<dbReference type="OMA" id="LMFLPPM"/>
<dbReference type="OrthoDB" id="9539450at2759"/>
<dbReference type="PAN-GO" id="Q9BQY4">
    <property type="GO annotations" value="3 GO annotations based on evolutionary models"/>
</dbReference>
<dbReference type="PhylomeDB" id="Q9BQY4"/>
<dbReference type="TreeFam" id="TF339348"/>
<dbReference type="PathwayCommons" id="Q9BQY4"/>
<dbReference type="SignaLink" id="Q9BQY4"/>
<dbReference type="BioGRID-ORCS" id="84528">
    <property type="hits" value="14 hits in 643 CRISPR screens"/>
</dbReference>
<dbReference type="GenomeRNAi" id="84528"/>
<dbReference type="Pharos" id="Q9BQY4">
    <property type="development level" value="Tbio"/>
</dbReference>
<dbReference type="PRO" id="PR:Q9BQY4"/>
<dbReference type="Proteomes" id="UP000005640">
    <property type="component" value="Chromosome X"/>
</dbReference>
<dbReference type="RNAct" id="Q9BQY4">
    <property type="molecule type" value="protein"/>
</dbReference>
<dbReference type="Bgee" id="ENSG00000131721">
    <property type="expression patterns" value="Expressed in male germ line stem cell (sensu Vertebrata) in testis and 22 other cell types or tissues"/>
</dbReference>
<dbReference type="GO" id="GO:0000785">
    <property type="term" value="C:chromatin"/>
    <property type="evidence" value="ECO:0000247"/>
    <property type="project" value="NTNU_SB"/>
</dbReference>
<dbReference type="GO" id="GO:0005634">
    <property type="term" value="C:nucleus"/>
    <property type="evidence" value="ECO:0007669"/>
    <property type="project" value="UniProtKB-SubCell"/>
</dbReference>
<dbReference type="GO" id="GO:0000981">
    <property type="term" value="F:DNA-binding transcription factor activity, RNA polymerase II-specific"/>
    <property type="evidence" value="ECO:0000247"/>
    <property type="project" value="NTNU_SB"/>
</dbReference>
<dbReference type="GO" id="GO:0042802">
    <property type="term" value="F:identical protein binding"/>
    <property type="evidence" value="ECO:0000353"/>
    <property type="project" value="IntAct"/>
</dbReference>
<dbReference type="GO" id="GO:0000977">
    <property type="term" value="F:RNA polymerase II transcription regulatory region sequence-specific DNA binding"/>
    <property type="evidence" value="ECO:0000318"/>
    <property type="project" value="GO_Central"/>
</dbReference>
<dbReference type="GO" id="GO:1990837">
    <property type="term" value="F:sequence-specific double-stranded DNA binding"/>
    <property type="evidence" value="ECO:0000314"/>
    <property type="project" value="ARUK-UCL"/>
</dbReference>
<dbReference type="GO" id="GO:0010628">
    <property type="term" value="P:positive regulation of gene expression"/>
    <property type="evidence" value="ECO:0000315"/>
    <property type="project" value="UniProtKB"/>
</dbReference>
<dbReference type="GO" id="GO:0006357">
    <property type="term" value="P:regulation of transcription by RNA polymerase II"/>
    <property type="evidence" value="ECO:0000318"/>
    <property type="project" value="GO_Central"/>
</dbReference>
<dbReference type="CDD" id="cd00086">
    <property type="entry name" value="homeodomain"/>
    <property type="match status" value="1"/>
</dbReference>
<dbReference type="FunFam" id="1.10.10.60:FF:000433">
    <property type="entry name" value="Reproductive homeobox 2B"/>
    <property type="match status" value="1"/>
</dbReference>
<dbReference type="Gene3D" id="1.10.10.60">
    <property type="entry name" value="Homeodomain-like"/>
    <property type="match status" value="1"/>
</dbReference>
<dbReference type="InterPro" id="IPR001356">
    <property type="entry name" value="HD"/>
</dbReference>
<dbReference type="InterPro" id="IPR017970">
    <property type="entry name" value="Homeobox_CS"/>
</dbReference>
<dbReference type="InterPro" id="IPR009057">
    <property type="entry name" value="Homeodomain-like_sf"/>
</dbReference>
<dbReference type="PANTHER" id="PTHR47465">
    <property type="entry name" value="MCG113260-RELATED-RELATED"/>
    <property type="match status" value="1"/>
</dbReference>
<dbReference type="Pfam" id="PF00046">
    <property type="entry name" value="Homeodomain"/>
    <property type="match status" value="1"/>
</dbReference>
<dbReference type="SMART" id="SM00389">
    <property type="entry name" value="HOX"/>
    <property type="match status" value="1"/>
</dbReference>
<dbReference type="SUPFAM" id="SSF46689">
    <property type="entry name" value="Homeodomain-like"/>
    <property type="match status" value="1"/>
</dbReference>
<dbReference type="PROSITE" id="PS00027">
    <property type="entry name" value="HOMEOBOX_1"/>
    <property type="match status" value="1"/>
</dbReference>
<dbReference type="PROSITE" id="PS50071">
    <property type="entry name" value="HOMEOBOX_2"/>
    <property type="match status" value="1"/>
</dbReference>
<keyword id="KW-0238">DNA-binding</keyword>
<keyword id="KW-0371">Homeobox</keyword>
<keyword id="KW-0539">Nucleus</keyword>
<keyword id="KW-1267">Proteomics identification</keyword>
<keyword id="KW-1185">Reference proteome</keyword>
<sequence length="288" mass="31692">MEPPDQCSQYMTSLLSPAVDDEKELQDMNAMVLSLTEEVKEEEEDAQPEPEQGTAAGEKLKSAGAQGGEEKDGGGEEKDGGGAGVPGHLWEGDLEGTSGSDGNVEDSDQSEKEPGQQYSRPQGAVGGLEPGNAQQPNVHAFTPLQLQELERIFQREQFPSEFLRRRLARSMNVTELAVQIWFENRRAKWRRHQRALMARNMLPFMAVGQPVMVTAAEAITAPLFISGMRDDYFWDHSHSSSLCFPMPPFPPPSLPLPLMLLPPMPPAGQAEFGPFPFVIVPSFTFPNV</sequence>
<protein>
    <recommendedName>
        <fullName>Rhox homeobox family member 2</fullName>
    </recommendedName>
    <alternativeName>
        <fullName>Paired-like homeobox protein PEPP-2</fullName>
    </alternativeName>
    <alternativeName>
        <fullName>Testis homeobox gene 1</fullName>
    </alternativeName>
</protein>
<organism>
    <name type="scientific">Homo sapiens</name>
    <name type="common">Human</name>
    <dbReference type="NCBI Taxonomy" id="9606"/>
    <lineage>
        <taxon>Eukaryota</taxon>
        <taxon>Metazoa</taxon>
        <taxon>Chordata</taxon>
        <taxon>Craniata</taxon>
        <taxon>Vertebrata</taxon>
        <taxon>Euteleostomi</taxon>
        <taxon>Mammalia</taxon>
        <taxon>Eutheria</taxon>
        <taxon>Euarchontoglires</taxon>
        <taxon>Primates</taxon>
        <taxon>Haplorrhini</taxon>
        <taxon>Catarrhini</taxon>
        <taxon>Hominidae</taxon>
        <taxon>Homo</taxon>
    </lineage>
</organism>
<accession>Q9BQY4</accession>
<accession>Q9BR00</accession>
<comment type="function">
    <text evidence="5">Transcription factor maybe involved in reproductive processes. Modulates expression of target genes encoding proteins involved in processes relevant to spermatogenesis.</text>
</comment>
<comment type="interaction">
    <interactant intactId="EBI-372094">
        <id>Q9BQY4</id>
    </interactant>
    <interactant intactId="EBI-2117357">
        <id>P15289</id>
        <label>ARSA</label>
    </interactant>
    <organismsDiffer>false</organismsDiffer>
    <experiments>3</experiments>
</comment>
<comment type="interaction">
    <interactant intactId="EBI-372094">
        <id>Q9BQY4</id>
    </interactant>
    <interactant intactId="EBI-930964">
        <id>P54253</id>
        <label>ATXN1</label>
    </interactant>
    <organismsDiffer>false</organismsDiffer>
    <experiments>4</experiments>
</comment>
<comment type="interaction">
    <interactant intactId="EBI-372094">
        <id>Q9BQY4</id>
    </interactant>
    <interactant intactId="EBI-10312707">
        <id>Q9NR55</id>
        <label>BATF3</label>
    </interactant>
    <organismsDiffer>false</organismsDiffer>
    <experiments>3</experiments>
</comment>
<comment type="interaction">
    <interactant intactId="EBI-372094">
        <id>Q9BQY4</id>
    </interactant>
    <interactant intactId="EBI-11983447">
        <id>Q8N9W6-4</id>
        <label>BOLL</label>
    </interactant>
    <organismsDiffer>false</organismsDiffer>
    <experiments>3</experiments>
</comment>
<comment type="interaction">
    <interactant intactId="EBI-372094">
        <id>Q9BQY4</id>
    </interactant>
    <interactant intactId="EBI-946029">
        <id>Q6P1W5</id>
        <label>C1orf94</label>
    </interactant>
    <organismsDiffer>false</organismsDiffer>
    <experiments>3</experiments>
</comment>
<comment type="interaction">
    <interactant intactId="EBI-372094">
        <id>Q9BQY4</id>
    </interactant>
    <interactant intactId="EBI-1383687">
        <id>Q9UQM7</id>
        <label>CAMK2A</label>
    </interactant>
    <organismsDiffer>false</organismsDiffer>
    <experiments>3</experiments>
</comment>
<comment type="interaction">
    <interactant intactId="EBI-372094">
        <id>Q9BQY4</id>
    </interactant>
    <interactant intactId="EBI-4314501">
        <id>P40199</id>
        <label>CEACAM6</label>
    </interactant>
    <organismsDiffer>false</organismsDiffer>
    <experiments>3</experiments>
</comment>
<comment type="interaction">
    <interactant intactId="EBI-372094">
        <id>Q9BQY4</id>
    </interactant>
    <interactant intactId="EBI-12261896">
        <id>Q5T4B2</id>
        <label>CERCAM</label>
    </interactant>
    <organismsDiffer>false</organismsDiffer>
    <experiments>3</experiments>
</comment>
<comment type="interaction">
    <interactant intactId="EBI-372094">
        <id>Q9BQY4</id>
    </interactant>
    <interactant intactId="EBI-751127">
        <id>Q9BUX1</id>
        <label>CHAC1</label>
    </interactant>
    <organismsDiffer>false</organismsDiffer>
    <experiments>2</experiments>
</comment>
<comment type="interaction">
    <interactant intactId="EBI-372094">
        <id>Q9BQY4</id>
    </interactant>
    <interactant intactId="EBI-12811067">
        <id>Q6J272</id>
        <label>CIMIP2A</label>
    </interactant>
    <organismsDiffer>false</organismsDiffer>
    <experiments>3</experiments>
</comment>
<comment type="interaction">
    <interactant intactId="EBI-372094">
        <id>Q9BQY4</id>
    </interactant>
    <interactant intactId="EBI-12884642">
        <id>Q03060-25</id>
        <label>CREM</label>
    </interactant>
    <organismsDiffer>false</organismsDiffer>
    <experiments>3</experiments>
</comment>
<comment type="interaction">
    <interactant intactId="EBI-372094">
        <id>Q9BQY4</id>
    </interactant>
    <interactant intactId="EBI-748171">
        <id>O43186</id>
        <label>CRX</label>
    </interactant>
    <organismsDiffer>false</organismsDiffer>
    <experiments>3</experiments>
</comment>
<comment type="interaction">
    <interactant intactId="EBI-372094">
        <id>Q9BQY4</id>
    </interactant>
    <interactant intactId="EBI-7043337">
        <id>P05813</id>
        <label>CRYBA1</label>
    </interactant>
    <organismsDiffer>false</organismsDiffer>
    <experiments>3</experiments>
</comment>
<comment type="interaction">
    <interactant intactId="EBI-372094">
        <id>Q9BQY4</id>
    </interactant>
    <interactant intactId="EBI-7875264">
        <id>O75553</id>
        <label>DAB1</label>
    </interactant>
    <organismsDiffer>false</organismsDiffer>
    <experiments>3</experiments>
</comment>
<comment type="interaction">
    <interactant intactId="EBI-372094">
        <id>Q9BQY4</id>
    </interactant>
    <interactant intactId="EBI-724310">
        <id>Q15038</id>
        <label>DAZAP2</label>
    </interactant>
    <organismsDiffer>false</organismsDiffer>
    <experiments>12</experiments>
</comment>
<comment type="interaction">
    <interactant intactId="EBI-372094">
        <id>Q9BQY4</id>
    </interactant>
    <interactant intactId="EBI-743414">
        <id>O95967</id>
        <label>EFEMP2</label>
    </interactant>
    <organismsDiffer>false</organismsDiffer>
    <experiments>2</experiments>
</comment>
<comment type="interaction">
    <interactant intactId="EBI-372094">
        <id>Q9BQY4</id>
    </interactant>
    <interactant intactId="EBI-11978259">
        <id>Q92567-2</id>
        <label>FAM168A</label>
    </interactant>
    <organismsDiffer>false</organismsDiffer>
    <experiments>6</experiments>
</comment>
<comment type="interaction">
    <interactant intactId="EBI-372094">
        <id>Q9BQY4</id>
    </interactant>
    <interactant intactId="EBI-12193763">
        <id>A1KXE4-2</id>
        <label>FAM168B</label>
    </interactant>
    <organismsDiffer>false</organismsDiffer>
    <experiments>3</experiments>
</comment>
<comment type="interaction">
    <interactant intactId="EBI-372094">
        <id>Q9BQY4</id>
    </interactant>
    <interactant intactId="EBI-535849">
        <id>Q8WVV9</id>
        <label>HNRNPLL</label>
    </interactant>
    <organismsDiffer>false</organismsDiffer>
    <experiments>3</experiments>
</comment>
<comment type="interaction">
    <interactant intactId="EBI-372094">
        <id>Q9BQY4</id>
    </interactant>
    <interactant intactId="EBI-9089060">
        <id>Q7Z7F0-4</id>
        <label>KHDC4</label>
    </interactant>
    <organismsDiffer>false</organismsDiffer>
    <experiments>3</experiments>
</comment>
<comment type="interaction">
    <interactant intactId="EBI-372094">
        <id>Q9BQY4</id>
    </interactant>
    <interactant intactId="EBI-9478422">
        <id>Q96G42</id>
        <label>KLHDC7B</label>
    </interactant>
    <organismsDiffer>false</organismsDiffer>
    <experiments>3</experiments>
</comment>
<comment type="interaction">
    <interactant intactId="EBI-372094">
        <id>Q9BQY4</id>
    </interactant>
    <interactant intactId="EBI-10176379">
        <id>P59991</id>
        <label>KRTAP12-2</label>
    </interactant>
    <organismsDiffer>false</organismsDiffer>
    <experiments>3</experiments>
</comment>
<comment type="interaction">
    <interactant intactId="EBI-372094">
        <id>Q9BQY4</id>
    </interactant>
    <interactant intactId="EBI-11953846">
        <id>Q52LG2</id>
        <label>KRTAP13-2</label>
    </interactant>
    <organismsDiffer>false</organismsDiffer>
    <experiments>3</experiments>
</comment>
<comment type="interaction">
    <interactant intactId="EBI-372094">
        <id>Q9BQY4</id>
    </interactant>
    <interactant intactId="EBI-11953996">
        <id>Q3LI77</id>
        <label>KRTAP13-4</label>
    </interactant>
    <organismsDiffer>false</organismsDiffer>
    <experiments>3</experiments>
</comment>
<comment type="interaction">
    <interactant intactId="EBI-372094">
        <id>Q9BQY4</id>
    </interactant>
    <interactant intactId="EBI-11992140">
        <id>Q3LI76</id>
        <label>KRTAP15-1</label>
    </interactant>
    <organismsDiffer>false</organismsDiffer>
    <experiments>3</experiments>
</comment>
<comment type="interaction">
    <interactant intactId="EBI-372094">
        <id>Q9BQY4</id>
    </interactant>
    <interactant intactId="EBI-1048945">
        <id>Q3LI72</id>
        <label>KRTAP19-5</label>
    </interactant>
    <organismsDiffer>false</organismsDiffer>
    <experiments>6</experiments>
</comment>
<comment type="interaction">
    <interactant intactId="EBI-372094">
        <id>Q9BQY4</id>
    </interactant>
    <interactant intactId="EBI-12805508">
        <id>Q3LI70</id>
        <label>KRTAP19-6</label>
    </interactant>
    <organismsDiffer>false</organismsDiffer>
    <experiments>3</experiments>
</comment>
<comment type="interaction">
    <interactant intactId="EBI-372094">
        <id>Q9BQY4</id>
    </interactant>
    <interactant intactId="EBI-10241353">
        <id>Q3SYF9</id>
        <label>KRTAP19-7</label>
    </interactant>
    <organismsDiffer>false</organismsDiffer>
    <experiments>6</experiments>
</comment>
<comment type="interaction">
    <interactant intactId="EBI-372094">
        <id>Q9BQY4</id>
    </interactant>
    <interactant intactId="EBI-3957672">
        <id>Q6PEX3</id>
        <label>KRTAP26-1</label>
    </interactant>
    <organismsDiffer>false</organismsDiffer>
    <experiments>3</experiments>
</comment>
<comment type="interaction">
    <interactant intactId="EBI-372094">
        <id>Q9BQY4</id>
    </interactant>
    <interactant intactId="EBI-12111050">
        <id>Q3LI64</id>
        <label>KRTAP6-1</label>
    </interactant>
    <organismsDiffer>false</organismsDiffer>
    <experiments>5</experiments>
</comment>
<comment type="interaction">
    <interactant intactId="EBI-372094">
        <id>Q9BQY4</id>
    </interactant>
    <interactant intactId="EBI-11962084">
        <id>Q3LI66</id>
        <label>KRTAP6-2</label>
    </interactant>
    <organismsDiffer>false</organismsDiffer>
    <experiments>3</experiments>
</comment>
<comment type="interaction">
    <interactant intactId="EBI-372094">
        <id>Q9BQY4</id>
    </interactant>
    <interactant intactId="EBI-18394498">
        <id>Q8IUC3</id>
        <label>KRTAP7-1</label>
    </interactant>
    <organismsDiffer>false</organismsDiffer>
    <experiments>3</experiments>
</comment>
<comment type="interaction">
    <interactant intactId="EBI-372094">
        <id>Q9BQY4</id>
    </interactant>
    <interactant intactId="EBI-742828">
        <id>Q14847</id>
        <label>LASP1</label>
    </interactant>
    <organismsDiffer>false</organismsDiffer>
    <experiments>3</experiments>
</comment>
<comment type="interaction">
    <interactant intactId="EBI-372094">
        <id>Q9BQY4</id>
    </interactant>
    <interactant intactId="EBI-9088686">
        <id>Q14847-2</id>
        <label>LASP1</label>
    </interactant>
    <organismsDiffer>false</organismsDiffer>
    <experiments>3</experiments>
</comment>
<comment type="interaction">
    <interactant intactId="EBI-372094">
        <id>Q9BQY4</id>
    </interactant>
    <interactant intactId="EBI-716006">
        <id>Q9Y5V3</id>
        <label>MAGED1</label>
    </interactant>
    <organismsDiffer>false</organismsDiffer>
    <experiments>6</experiments>
</comment>
<comment type="interaction">
    <interactant intactId="EBI-372094">
        <id>Q9BQY4</id>
    </interactant>
    <interactant intactId="EBI-724076">
        <id>Q99750</id>
        <label>MDFI</label>
    </interactant>
    <organismsDiffer>false</organismsDiffer>
    <experiments>3</experiments>
</comment>
<comment type="interaction">
    <interactant intactId="EBI-372094">
        <id>Q9BQY4</id>
    </interactant>
    <interactant intactId="EBI-6447480">
        <id>P35548</id>
        <label>MSX2</label>
    </interactant>
    <organismsDiffer>false</organismsDiffer>
    <experiments>3</experiments>
</comment>
<comment type="interaction">
    <interactant intactId="EBI-372094">
        <id>Q9BQY4</id>
    </interactant>
    <interactant intactId="EBI-1385894">
        <id>Q99801</id>
        <label>NKX3-1</label>
    </interactant>
    <organismsDiffer>false</organismsDiffer>
    <experiments>3</experiments>
</comment>
<comment type="interaction">
    <interactant intactId="EBI-372094">
        <id>Q9BQY4</id>
    </interactant>
    <interactant intactId="EBI-741582">
        <id>O60568</id>
        <label>PLOD3</label>
    </interactant>
    <organismsDiffer>false</organismsDiffer>
    <experiments>2</experiments>
</comment>
<comment type="interaction">
    <interactant intactId="EBI-372094">
        <id>Q9BQY4</id>
    </interactant>
    <interactant intactId="EBI-12754095">
        <id>P86480</id>
        <label>PRR20D</label>
    </interactant>
    <organismsDiffer>false</organismsDiffer>
    <experiments>3</experiments>
</comment>
<comment type="interaction">
    <interactant intactId="EBI-372094">
        <id>Q9BQY4</id>
    </interactant>
    <interactant intactId="EBI-11959565">
        <id>Q9NV39</id>
        <label>PRR34</label>
    </interactant>
    <organismsDiffer>false</organismsDiffer>
    <experiments>3</experiments>
</comment>
<comment type="interaction">
    <interactant intactId="EBI-372094">
        <id>Q9BQY4</id>
    </interactant>
    <interactant intactId="EBI-746056">
        <id>O43251</id>
        <label>RBFOX2</label>
    </interactant>
    <organismsDiffer>false</organismsDiffer>
    <experiments>3</experiments>
</comment>
<comment type="interaction">
    <interactant intactId="EBI-372094">
        <id>Q9BQY4</id>
    </interactant>
    <interactant intactId="EBI-11963050">
        <id>O43251-10</id>
        <label>RBFOX2</label>
    </interactant>
    <organismsDiffer>false</organismsDiffer>
    <experiments>3</experiments>
</comment>
<comment type="interaction">
    <interactant intactId="EBI-372094">
        <id>Q9BQY4</id>
    </interactant>
    <interactant intactId="EBI-740322">
        <id>Q93062</id>
        <label>RBPMS</label>
    </interactant>
    <organismsDiffer>false</organismsDiffer>
    <experiments>6</experiments>
</comment>
<comment type="interaction">
    <interactant intactId="EBI-372094">
        <id>Q9BQY4</id>
    </interactant>
    <interactant intactId="EBI-740343">
        <id>Q93062-3</id>
        <label>RBPMS</label>
    </interactant>
    <organismsDiffer>false</organismsDiffer>
    <experiments>3</experiments>
</comment>
<comment type="interaction">
    <interactant intactId="EBI-372094">
        <id>Q9BQY4</id>
    </interactant>
    <interactant intactId="EBI-11987469">
        <id>Q6ZRY4</id>
        <label>RBPMS2</label>
    </interactant>
    <organismsDiffer>false</organismsDiffer>
    <experiments>3</experiments>
</comment>
<comment type="interaction">
    <interactant intactId="EBI-372094">
        <id>Q9BQY4</id>
    </interactant>
    <interactant intactId="EBI-372094">
        <id>Q9BQY4</id>
        <label>RHOXF2</label>
    </interactant>
    <organismsDiffer>false</organismsDiffer>
    <experiments>3</experiments>
</comment>
<comment type="interaction">
    <interactant intactId="EBI-372094">
        <id>Q9BQY4</id>
    </interactant>
    <interactant intactId="EBI-2340927">
        <id>P78317</id>
        <label>RNF4</label>
    </interactant>
    <organismsDiffer>false</organismsDiffer>
    <experiments>3</experiments>
</comment>
<comment type="interaction">
    <interactant intactId="EBI-372094">
        <id>Q9BQY4</id>
    </interactant>
    <interactant intactId="EBI-80140">
        <id>P63165</id>
        <label>SUMO1</label>
    </interactant>
    <organismsDiffer>false</organismsDiffer>
    <experiments>3</experiments>
</comment>
<comment type="interaction">
    <interactant intactId="EBI-372094">
        <id>Q9BQY4</id>
    </interactant>
    <interactant intactId="EBI-752030">
        <id>Q96A09</id>
        <label>TENT5B</label>
    </interactant>
    <organismsDiffer>false</organismsDiffer>
    <experiments>4</experiments>
</comment>
<comment type="interaction">
    <interactant intactId="EBI-372094">
        <id>Q9BQY4</id>
    </interactant>
    <interactant intactId="EBI-741787">
        <id>Q5VWP2</id>
        <label>TENT5C</label>
    </interactant>
    <organismsDiffer>false</organismsDiffer>
    <experiments>3</experiments>
</comment>
<comment type="interaction">
    <interactant intactId="EBI-372094">
        <id>Q9BQY4</id>
    </interactant>
    <interactant intactId="EBI-947859">
        <id>Q99973</id>
        <label>TEP1</label>
    </interactant>
    <organismsDiffer>false</organismsDiffer>
    <experiments>3</experiments>
</comment>
<comment type="interaction">
    <interactant intactId="EBI-372094">
        <id>Q9BQY4</id>
    </interactant>
    <interactant intactId="EBI-717810">
        <id>Q08117</id>
        <label>TLE5</label>
    </interactant>
    <organismsDiffer>false</organismsDiffer>
    <experiments>3</experiments>
</comment>
<comment type="interaction">
    <interactant intactId="EBI-372094">
        <id>Q9BQY4</id>
    </interactant>
    <interactant intactId="EBI-74615">
        <id>Q9H0E2</id>
        <label>TOLLIP</label>
    </interactant>
    <organismsDiffer>false</organismsDiffer>
    <experiments>6</experiments>
</comment>
<comment type="interaction">
    <interactant intactId="EBI-372094">
        <id>Q9BQY4</id>
    </interactant>
    <interactant intactId="EBI-358993">
        <id>Q15645</id>
        <label>TRIP13</label>
    </interactant>
    <organismsDiffer>false</organismsDiffer>
    <experiments>8</experiments>
</comment>
<comment type="interaction">
    <interactant intactId="EBI-372094">
        <id>Q9BQY4</id>
    </interactant>
    <interactant intactId="EBI-2514383">
        <id>Q5T6F2</id>
        <label>UBAP2</label>
    </interactant>
    <organismsDiffer>false</organismsDiffer>
    <experiments>3</experiments>
</comment>
<comment type="interaction">
    <interactant intactId="EBI-372094">
        <id>Q9BQY4</id>
    </interactant>
    <interactant intactId="EBI-2107455">
        <id>Q08AM6</id>
        <label>VAC14</label>
    </interactant>
    <organismsDiffer>false</organismsDiffer>
    <experiments>6</experiments>
</comment>
<comment type="interaction">
    <interactant intactId="EBI-372094">
        <id>Q9BQY4</id>
    </interactant>
    <interactant intactId="EBI-10191303">
        <id>O95231</id>
        <label>VENTX</label>
    </interactant>
    <organismsDiffer>false</organismsDiffer>
    <experiments>3</experiments>
</comment>
<comment type="interaction">
    <interactant intactId="EBI-372094">
        <id>Q9BQY4</id>
    </interactant>
    <interactant intactId="EBI-10188476">
        <id>A0A0C4DGF1</id>
        <label>ZBTB32</label>
    </interactant>
    <organismsDiffer>false</organismsDiffer>
    <experiments>11</experiments>
</comment>
<comment type="interaction">
    <interactant intactId="EBI-372094">
        <id>Q9BQY4</id>
    </interactant>
    <interactant intactId="EBI-954098">
        <id>Q9Y2Y4</id>
        <label>ZBTB32</label>
    </interactant>
    <organismsDiffer>false</organismsDiffer>
    <experiments>3</experiments>
</comment>
<comment type="interaction">
    <interactant intactId="EBI-372094">
        <id>Q9BQY4</id>
    </interactant>
    <interactant intactId="EBI-12005952">
        <id>Q8IZ20</id>
        <label>ZNF683</label>
    </interactant>
    <organismsDiffer>false</organismsDiffer>
    <experiments>3</experiments>
</comment>
<comment type="interaction">
    <interactant intactId="EBI-372094">
        <id>Q9BQY4</id>
    </interactant>
    <interactant intactId="EBI-750454">
        <id>Q96EJ4</id>
    </interactant>
    <organismsDiffer>false</organismsDiffer>
    <experiments>3</experiments>
</comment>
<comment type="subcellular location">
    <subcellularLocation>
        <location evidence="2">Nucleus</location>
    </subcellularLocation>
</comment>
<comment type="tissue specificity">
    <text evidence="4 5">Testis. Not detected in epididymis nor placenta. In testis, mainly expressed in germ cells, but also detected in somatic cells such as Sertoli cells, Leydig cells and peritubular cells (PubMed:28171660).</text>
</comment>
<comment type="developmental stage">
    <text evidence="5">Predominantly expressed in early stage germ cells, type-B spermatogonia and early spermatocytes.</text>
</comment>
<comment type="similarity">
    <text evidence="6">Belongs to the paired-like homeobox family. PEPP subfamily.</text>
</comment>
<comment type="caution">
    <text evidence="7">RHOF2 and RHOF2B are arranged in a head-to-head orientation and share high sequence similarity (&gt;99%). They cannot easily be distinguished and are usually analyzed as a single gene.</text>
</comment>
<feature type="chain" id="PRO_0000049246" description="Rhox homeobox family member 2">
    <location>
        <begin position="1"/>
        <end position="288"/>
    </location>
</feature>
<feature type="DNA-binding region" description="Homeobox" evidence="2">
    <location>
        <begin position="134"/>
        <end position="193"/>
    </location>
</feature>
<feature type="region of interest" description="Disordered" evidence="3">
    <location>
        <begin position="16"/>
        <end position="136"/>
    </location>
</feature>
<feature type="short sequence motif" description="Nuclear localization signal" evidence="1">
    <location>
        <begin position="186"/>
        <end position="195"/>
    </location>
</feature>
<feature type="compositionally biased region" description="Acidic residues" evidence="3">
    <location>
        <begin position="39"/>
        <end position="48"/>
    </location>
</feature>
<feature type="compositionally biased region" description="Basic and acidic residues" evidence="3">
    <location>
        <begin position="68"/>
        <end position="80"/>
    </location>
</feature>
<feature type="sequence variant" id="VAR_078297" description="Found in infertile men; uncertain significance; decreased induction of target genes expression; dbSNP:rs148604152." evidence="5">
    <original>G</original>
    <variation>R</variation>
    <location>
        <position position="68"/>
    </location>
</feature>
<feature type="sequence variant" id="VAR_078298" description="Found in infertile men; uncertain significance; dbSNP:rs199871532." evidence="5">
    <original>L</original>
    <variation>F</variation>
    <location>
        <position position="176"/>
    </location>
</feature>
<feature type="sequence variant" id="VAR_078299" description="Found in infertile men; uncertain significance; decreased induction of target genes expression; dbSNP:rs1210761967." evidence="5">
    <original>G</original>
    <variation>R</variation>
    <location>
        <position position="227"/>
    </location>
</feature>
<feature type="sequence variant" id="VAR_078300" description="Found in infertile men; uncertain significance; dbSNP:rs6646602." evidence="5">
    <original>D</original>
    <variation>G</variation>
    <location>
        <position position="235"/>
    </location>
</feature>